<dbReference type="EMBL" id="AB210855">
    <property type="protein sequence ID" value="BAD95468.1"/>
    <property type="molecule type" value="mRNA"/>
</dbReference>
<dbReference type="EMBL" id="BC128712">
    <property type="protein sequence ID" value="AAI28713.1"/>
    <property type="molecule type" value="mRNA"/>
</dbReference>
<dbReference type="RefSeq" id="NP_001019531.1">
    <property type="nucleotide sequence ID" value="NM_001024360.2"/>
</dbReference>
<dbReference type="SMR" id="Q587K4"/>
<dbReference type="FunCoup" id="Q587K4">
    <property type="interactions" value="1337"/>
</dbReference>
<dbReference type="STRING" id="10116.ENSRNOP00000057899"/>
<dbReference type="iPTMnet" id="Q587K4"/>
<dbReference type="PhosphoSitePlus" id="Q587K4"/>
<dbReference type="PaxDb" id="10116-ENSRNOP00000057899"/>
<dbReference type="Ensembl" id="ENSRNOT00000061185.3">
    <property type="protein sequence ID" value="ENSRNOP00000057899.2"/>
    <property type="gene ID" value="ENSRNOG00000039856.3"/>
</dbReference>
<dbReference type="GeneID" id="501101"/>
<dbReference type="KEGG" id="rno:501101"/>
<dbReference type="UCSC" id="RGD:1561390">
    <property type="organism name" value="rat"/>
</dbReference>
<dbReference type="AGR" id="RGD:1561390"/>
<dbReference type="CTD" id="221424"/>
<dbReference type="RGD" id="1561390">
    <property type="gene designation" value="Lrrc73"/>
</dbReference>
<dbReference type="eggNOG" id="ENOG502QSR8">
    <property type="taxonomic scope" value="Eukaryota"/>
</dbReference>
<dbReference type="GeneTree" id="ENSGT00390000003256"/>
<dbReference type="HOGENOM" id="CLU_079918_0_0_1"/>
<dbReference type="InParanoid" id="Q587K4"/>
<dbReference type="OMA" id="NPWICQS"/>
<dbReference type="OrthoDB" id="120976at2759"/>
<dbReference type="PhylomeDB" id="Q587K4"/>
<dbReference type="TreeFam" id="TF328343"/>
<dbReference type="PRO" id="PR:Q587K4"/>
<dbReference type="Proteomes" id="UP000002494">
    <property type="component" value="Chromosome 9"/>
</dbReference>
<dbReference type="Bgee" id="ENSRNOG00000039856">
    <property type="expression patterns" value="Expressed in testis and 15 other cell types or tissues"/>
</dbReference>
<dbReference type="FunFam" id="3.80.10.10:FF:000231">
    <property type="entry name" value="Leucine-rich repeat-containing protein 73 isoform X1"/>
    <property type="match status" value="1"/>
</dbReference>
<dbReference type="FunFam" id="3.80.10.10:FF:000241">
    <property type="entry name" value="leucine-rich repeat-containing protein 73 isoform X1"/>
    <property type="match status" value="1"/>
</dbReference>
<dbReference type="Gene3D" id="3.80.10.10">
    <property type="entry name" value="Ribonuclease Inhibitor"/>
    <property type="match status" value="2"/>
</dbReference>
<dbReference type="InterPro" id="IPR052201">
    <property type="entry name" value="LRR-containing_regulator"/>
</dbReference>
<dbReference type="InterPro" id="IPR032675">
    <property type="entry name" value="LRR_dom_sf"/>
</dbReference>
<dbReference type="PANTHER" id="PTHR24111">
    <property type="entry name" value="LEUCINE-RICH REPEAT-CONTAINING PROTEIN 34"/>
    <property type="match status" value="1"/>
</dbReference>
<dbReference type="PANTHER" id="PTHR24111:SF3">
    <property type="entry name" value="LEUCINE-RICH REPEAT-CONTAINING PROTEIN 73"/>
    <property type="match status" value="1"/>
</dbReference>
<dbReference type="SMART" id="SM00368">
    <property type="entry name" value="LRR_RI"/>
    <property type="match status" value="7"/>
</dbReference>
<dbReference type="SUPFAM" id="SSF52047">
    <property type="entry name" value="RNI-like"/>
    <property type="match status" value="1"/>
</dbReference>
<organism>
    <name type="scientific">Rattus norvegicus</name>
    <name type="common">Rat</name>
    <dbReference type="NCBI Taxonomy" id="10116"/>
    <lineage>
        <taxon>Eukaryota</taxon>
        <taxon>Metazoa</taxon>
        <taxon>Chordata</taxon>
        <taxon>Craniata</taxon>
        <taxon>Vertebrata</taxon>
        <taxon>Euteleostomi</taxon>
        <taxon>Mammalia</taxon>
        <taxon>Eutheria</taxon>
        <taxon>Euarchontoglires</taxon>
        <taxon>Glires</taxon>
        <taxon>Rodentia</taxon>
        <taxon>Myomorpha</taxon>
        <taxon>Muroidea</taxon>
        <taxon>Muridae</taxon>
        <taxon>Murinae</taxon>
        <taxon>Rattus</taxon>
    </lineage>
</organism>
<feature type="chain" id="PRO_0000252160" description="Leucine-rich repeat-containing protein 73">
    <location>
        <begin position="1"/>
        <end position="316"/>
    </location>
</feature>
<feature type="repeat" description="LRR 1">
    <location>
        <begin position="57"/>
        <end position="78"/>
    </location>
</feature>
<feature type="repeat" description="LRR 2">
    <location>
        <begin position="86"/>
        <end position="106"/>
    </location>
</feature>
<feature type="repeat" description="LRR 3">
    <location>
        <begin position="114"/>
        <end position="137"/>
    </location>
</feature>
<feature type="repeat" description="LRR 4">
    <location>
        <begin position="145"/>
        <end position="166"/>
    </location>
</feature>
<feature type="repeat" description="LRR 5">
    <location>
        <begin position="174"/>
        <end position="187"/>
    </location>
</feature>
<feature type="repeat" description="LRR 6">
    <location>
        <begin position="202"/>
        <end position="223"/>
    </location>
</feature>
<feature type="repeat" description="LRR 7">
    <location>
        <begin position="231"/>
        <end position="250"/>
    </location>
</feature>
<feature type="region of interest" description="Disordered" evidence="1">
    <location>
        <begin position="257"/>
        <end position="296"/>
    </location>
</feature>
<feature type="compositionally biased region" description="Basic and acidic residues" evidence="1">
    <location>
        <begin position="272"/>
        <end position="281"/>
    </location>
</feature>
<keyword id="KW-0433">Leucine-rich repeat</keyword>
<keyword id="KW-1185">Reference proteome</keyword>
<keyword id="KW-0677">Repeat</keyword>
<evidence type="ECO:0000256" key="1">
    <source>
        <dbReference type="SAM" id="MobiDB-lite"/>
    </source>
</evidence>
<name>LRC73_RAT</name>
<gene>
    <name type="primary">Lrrc73</name>
    <name type="synonym">Nod3l</name>
</gene>
<proteinExistence type="evidence at transcript level"/>
<reference key="1">
    <citation type="submission" date="2005-04" db="EMBL/GenBank/DDBJ databases">
        <title>Characterization of NOD3-like protein in the rat brain.</title>
        <authorList>
            <person name="Lu Y."/>
            <person name="Suzuki T."/>
        </authorList>
    </citation>
    <scope>NUCLEOTIDE SEQUENCE [MRNA]</scope>
</reference>
<reference key="2">
    <citation type="journal article" date="2004" name="Genome Res.">
        <title>The status, quality, and expansion of the NIH full-length cDNA project: the Mammalian Gene Collection (MGC).</title>
        <authorList>
            <consortium name="The MGC Project Team"/>
        </authorList>
    </citation>
    <scope>NUCLEOTIDE SEQUENCE [LARGE SCALE MRNA]</scope>
    <source>
        <tissue>Testis</tissue>
    </source>
</reference>
<accession>Q587K4</accession>
<accession>A1A5L6</accession>
<protein>
    <recommendedName>
        <fullName>Leucine-rich repeat-containing protein 73</fullName>
    </recommendedName>
    <alternativeName>
        <fullName>NOD3-like protein</fullName>
    </alternativeName>
</protein>
<sequence>MLPSSIQISGEPLSGAEVRDICRGLRDNAVRLLSLRGCRLCDRDFGRICRALAGATSLAQLNLNLGVVSSPSRIKQLAEALRTNRSIQSLFLHGSPLTDAGLALLNPALALHPALVALDLGDCMLGDEAINLICGLLPPDGAKSGLKELTLSANPGITPKGWSRLAIAVAHSSQVRVLNLDYNPLGDHVAGMLAVAVASSRTLEVLDLEGTGLTNQSAQTLLDMVENYPTALRSLVLAENSISPELQQQICDLLSEGEEEEEMAGGAADTQEWGRGREPAAHQRGGSSWKCPSDPNSQMVLMTSGLGDSLLAETEM</sequence>